<feature type="chain" id="PRO_0000189986" description="Dedicator of cytokinesis protein 2">
    <location>
        <begin position="1"/>
        <end position="1830"/>
    </location>
</feature>
<feature type="domain" description="SH3" evidence="2">
    <location>
        <begin position="8"/>
        <end position="69"/>
    </location>
</feature>
<feature type="domain" description="C2 DOCK-type" evidence="3">
    <location>
        <begin position="423"/>
        <end position="607"/>
    </location>
</feature>
<feature type="domain" description="DOCKER" evidence="4">
    <location>
        <begin position="1211"/>
        <end position="1622"/>
    </location>
</feature>
<feature type="region of interest" description="Interaction with CRKL" evidence="8">
    <location>
        <begin position="939"/>
        <end position="1476"/>
    </location>
</feature>
<feature type="region of interest" description="Disordered" evidence="5">
    <location>
        <begin position="1651"/>
        <end position="1704"/>
    </location>
</feature>
<feature type="compositionally biased region" description="Polar residues" evidence="5">
    <location>
        <begin position="1651"/>
        <end position="1665"/>
    </location>
</feature>
<feature type="modified residue" description="N6-acetyllysine" evidence="15">
    <location>
        <position position="304"/>
    </location>
</feature>
<feature type="modified residue" description="Phosphoserine" evidence="16">
    <location>
        <position position="588"/>
    </location>
</feature>
<feature type="modified residue" description="Phosphoserine" evidence="16">
    <location>
        <position position="593"/>
    </location>
</feature>
<feature type="modified residue" description="N6-acetyllysine" evidence="15">
    <location>
        <position position="738"/>
    </location>
</feature>
<feature type="modified residue" description="Phosphoserine" evidence="13 14 16 17 18">
    <location>
        <position position="1685"/>
    </location>
</feature>
<feature type="modified residue" description="Phosphoserine" evidence="17">
    <location>
        <position position="1706"/>
    </location>
</feature>
<feature type="modified residue" description="Phosphoserine" evidence="16 17">
    <location>
        <position position="1731"/>
    </location>
</feature>
<feature type="modified residue" description="Phosphoserine" evidence="17">
    <location>
        <position position="1784"/>
    </location>
</feature>
<feature type="splice variant" id="VSP_007696" description="In isoform 2." evidence="11">
    <location>
        <begin position="1"/>
        <end position="449"/>
    </location>
</feature>
<feature type="splice variant" id="VSP_007697" description="In isoform 2." evidence="11">
    <location>
        <begin position="462"/>
        <end position="494"/>
    </location>
</feature>
<feature type="splice variant" id="VSP_007698" description="In isoform 2." evidence="11">
    <location>
        <begin position="630"/>
        <end position="766"/>
    </location>
</feature>
<feature type="splice variant" id="VSP_007699" description="In isoform 2." evidence="11">
    <original>SHFVACMTAILNQMGDQHYSFY</original>
    <variation>GACCNCGFPSSTPHSLIQWLWG</variation>
    <location>
        <begin position="934"/>
        <end position="955"/>
    </location>
</feature>
<feature type="splice variant" id="VSP_007700" description="In isoform 2." evidence="11">
    <location>
        <begin position="956"/>
        <end position="1830"/>
    </location>
</feature>
<feature type="sequence variant" id="VAR_073859" description="In IMD40; dbSNP:rs1581090174." evidence="10">
    <original>R</original>
    <variation>S</variation>
    <location>
        <position position="751"/>
    </location>
</feature>
<feature type="sequence variant" id="VAR_073860" description="In IMD40; dbSNP:rs780318765." evidence="10">
    <original>R</original>
    <variation>W</variation>
    <location>
        <position position="1104"/>
    </location>
</feature>
<feature type="sequence variant" id="VAR_053064" description="In dbSNP:rs13179480.">
    <original>D</original>
    <variation>A</variation>
    <location>
        <position position="1558"/>
    </location>
</feature>
<feature type="sequence variant" id="VAR_015822" description="In dbSNP:rs2270898.">
    <original>S</original>
    <variation>T</variation>
    <location>
        <position position="1746"/>
    </location>
</feature>
<feature type="sequence variant" id="VAR_022137" description="In dbSNP:rs2270898.">
    <original>T</original>
    <variation>S</variation>
    <location>
        <position position="1779"/>
    </location>
</feature>
<feature type="strand" evidence="20">
    <location>
        <begin position="12"/>
        <end position="17"/>
    </location>
</feature>
<feature type="strand" evidence="20">
    <location>
        <begin position="34"/>
        <end position="41"/>
    </location>
</feature>
<feature type="strand" evidence="20">
    <location>
        <begin position="44"/>
        <end position="49"/>
    </location>
</feature>
<feature type="strand" evidence="20">
    <location>
        <begin position="52"/>
        <end position="60"/>
    </location>
</feature>
<feature type="helix" evidence="20">
    <location>
        <begin position="61"/>
        <end position="63"/>
    </location>
</feature>
<feature type="strand" evidence="20">
    <location>
        <begin position="64"/>
        <end position="67"/>
    </location>
</feature>
<feature type="helix" evidence="20">
    <location>
        <begin position="84"/>
        <end position="107"/>
    </location>
</feature>
<feature type="helix" evidence="20">
    <location>
        <begin position="111"/>
        <end position="133"/>
    </location>
</feature>
<feature type="helix" evidence="20">
    <location>
        <begin position="138"/>
        <end position="158"/>
    </location>
</feature>
<feature type="helix" evidence="19">
    <location>
        <begin position="1197"/>
        <end position="1214"/>
    </location>
</feature>
<feature type="helix" evidence="19">
    <location>
        <begin position="1217"/>
        <end position="1233"/>
    </location>
</feature>
<feature type="helix" evidence="19">
    <location>
        <begin position="1237"/>
        <end position="1248"/>
    </location>
</feature>
<feature type="turn" evidence="21">
    <location>
        <begin position="1265"/>
        <end position="1267"/>
    </location>
</feature>
<feature type="helix" evidence="19">
    <location>
        <begin position="1273"/>
        <end position="1291"/>
    </location>
</feature>
<feature type="helix" evidence="19">
    <location>
        <begin position="1294"/>
        <end position="1310"/>
    </location>
</feature>
<feature type="helix" evidence="19">
    <location>
        <begin position="1315"/>
        <end position="1334"/>
    </location>
</feature>
<feature type="strand" evidence="19">
    <location>
        <begin position="1342"/>
        <end position="1349"/>
    </location>
</feature>
<feature type="turn" evidence="19">
    <location>
        <begin position="1354"/>
        <end position="1358"/>
    </location>
</feature>
<feature type="strand" evidence="19">
    <location>
        <begin position="1359"/>
        <end position="1364"/>
    </location>
</feature>
<feature type="helix" evidence="19">
    <location>
        <begin position="1371"/>
        <end position="1381"/>
    </location>
</feature>
<feature type="strand" evidence="21">
    <location>
        <begin position="1385"/>
        <end position="1387"/>
    </location>
</feature>
<feature type="helix" evidence="19">
    <location>
        <begin position="1396"/>
        <end position="1400"/>
    </location>
</feature>
<feature type="strand" evidence="19">
    <location>
        <begin position="1405"/>
        <end position="1414"/>
    </location>
</feature>
<feature type="helix" evidence="19">
    <location>
        <begin position="1419"/>
        <end position="1421"/>
    </location>
</feature>
<feature type="strand" evidence="19">
    <location>
        <begin position="1422"/>
        <end position="1424"/>
    </location>
</feature>
<feature type="helix" evidence="19">
    <location>
        <begin position="1428"/>
        <end position="1436"/>
    </location>
</feature>
<feature type="strand" evidence="19">
    <location>
        <begin position="1437"/>
        <end position="1449"/>
    </location>
</feature>
<feature type="helix" evidence="19">
    <location>
        <begin position="1458"/>
        <end position="1461"/>
    </location>
</feature>
<feature type="strand" evidence="19">
    <location>
        <begin position="1462"/>
        <end position="1492"/>
    </location>
</feature>
<feature type="helix" evidence="19">
    <location>
        <begin position="1494"/>
        <end position="1518"/>
    </location>
</feature>
<feature type="strand" evidence="19">
    <location>
        <begin position="1520"/>
        <end position="1522"/>
    </location>
</feature>
<feature type="helix" evidence="19">
    <location>
        <begin position="1525"/>
        <end position="1535"/>
    </location>
</feature>
<feature type="strand" evidence="19">
    <location>
        <begin position="1538"/>
        <end position="1540"/>
    </location>
</feature>
<feature type="helix" evidence="19">
    <location>
        <begin position="1544"/>
        <end position="1550"/>
    </location>
</feature>
<feature type="helix" evidence="19">
    <location>
        <begin position="1553"/>
        <end position="1558"/>
    </location>
</feature>
<feature type="helix" evidence="21">
    <location>
        <begin position="1560"/>
        <end position="1562"/>
    </location>
</feature>
<feature type="helix" evidence="19">
    <location>
        <begin position="1563"/>
        <end position="1589"/>
    </location>
</feature>
<feature type="helix" evidence="19">
    <location>
        <begin position="1593"/>
        <end position="1595"/>
    </location>
</feature>
<feature type="helix" evidence="19">
    <location>
        <begin position="1596"/>
        <end position="1617"/>
    </location>
</feature>
<gene>
    <name type="primary">DOCK2</name>
    <name type="synonym">KIAA0209</name>
</gene>
<evidence type="ECO:0000250" key="1"/>
<evidence type="ECO:0000255" key="2">
    <source>
        <dbReference type="PROSITE-ProRule" id="PRU00192"/>
    </source>
</evidence>
<evidence type="ECO:0000255" key="3">
    <source>
        <dbReference type="PROSITE-ProRule" id="PRU00983"/>
    </source>
</evidence>
<evidence type="ECO:0000255" key="4">
    <source>
        <dbReference type="PROSITE-ProRule" id="PRU00984"/>
    </source>
</evidence>
<evidence type="ECO:0000256" key="5">
    <source>
        <dbReference type="SAM" id="MobiDB-lite"/>
    </source>
</evidence>
<evidence type="ECO:0000269" key="6">
    <source>
    </source>
</evidence>
<evidence type="ECO:0000269" key="7">
    <source>
    </source>
</evidence>
<evidence type="ECO:0000269" key="8">
    <source>
    </source>
</evidence>
<evidence type="ECO:0000269" key="9">
    <source>
    </source>
</evidence>
<evidence type="ECO:0000269" key="10">
    <source>
    </source>
</evidence>
<evidence type="ECO:0000303" key="11">
    <source>
    </source>
</evidence>
<evidence type="ECO:0000305" key="12"/>
<evidence type="ECO:0007744" key="13">
    <source>
    </source>
</evidence>
<evidence type="ECO:0007744" key="14">
    <source>
    </source>
</evidence>
<evidence type="ECO:0007744" key="15">
    <source>
    </source>
</evidence>
<evidence type="ECO:0007744" key="16">
    <source>
    </source>
</evidence>
<evidence type="ECO:0007744" key="17">
    <source>
    </source>
</evidence>
<evidence type="ECO:0007744" key="18">
    <source>
    </source>
</evidence>
<evidence type="ECO:0007829" key="19">
    <source>
        <dbReference type="PDB" id="2YIN"/>
    </source>
</evidence>
<evidence type="ECO:0007829" key="20">
    <source>
        <dbReference type="PDB" id="3A98"/>
    </source>
</evidence>
<evidence type="ECO:0007829" key="21">
    <source>
        <dbReference type="PDB" id="3B13"/>
    </source>
</evidence>
<accession>Q92608</accession>
<accession>Q2M3I0</accession>
<accession>Q96AK7</accession>
<protein>
    <recommendedName>
        <fullName>Dedicator of cytokinesis protein 2</fullName>
    </recommendedName>
</protein>
<organism>
    <name type="scientific">Homo sapiens</name>
    <name type="common">Human</name>
    <dbReference type="NCBI Taxonomy" id="9606"/>
    <lineage>
        <taxon>Eukaryota</taxon>
        <taxon>Metazoa</taxon>
        <taxon>Chordata</taxon>
        <taxon>Craniata</taxon>
        <taxon>Vertebrata</taxon>
        <taxon>Euteleostomi</taxon>
        <taxon>Mammalia</taxon>
        <taxon>Eutheria</taxon>
        <taxon>Euarchontoglires</taxon>
        <taxon>Primates</taxon>
        <taxon>Haplorrhini</taxon>
        <taxon>Catarrhini</taxon>
        <taxon>Hominidae</taxon>
        <taxon>Homo</taxon>
    </lineage>
</organism>
<name>DOCK2_HUMAN</name>
<proteinExistence type="evidence at protein level"/>
<comment type="function">
    <text evidence="9">Involved in cytoskeletal rearrangements required for lymphocyte migration in response of chemokines. Activates RAC1 and RAC2, but not CDC42, by functioning as a guanine nucleotide exchange factor (GEF), which exchanges bound GDP for free GTP. May also participate in IL2 transcriptional activation via the activation of RAC2.</text>
</comment>
<comment type="subunit">
    <text evidence="6 7 8 9 12">Homodimer (Probable). Interacts with RAC1 and RAC2. Interacts with CRKL and VAV. Interacts with CD3Z.</text>
</comment>
<comment type="interaction">
    <interactant intactId="EBI-448771">
        <id>Q92608</id>
    </interactant>
    <interactant intactId="EBI-739580">
        <id>Q13137</id>
        <label>CALCOCO2</label>
    </interactant>
    <organismsDiffer>false</organismsDiffer>
    <experiments>3</experiments>
</comment>
<comment type="interaction">
    <interactant intactId="EBI-448771">
        <id>Q92608</id>
    </interactant>
    <interactant intactId="EBI-3866279">
        <id>Q9BWT7</id>
        <label>CARD10</label>
    </interactant>
    <organismsDiffer>false</organismsDiffer>
    <experiments>3</experiments>
</comment>
<comment type="interaction">
    <interactant intactId="EBI-448771">
        <id>Q92608</id>
    </interactant>
    <interactant intactId="EBI-748961">
        <id>O95273</id>
        <label>CCNDBP1</label>
    </interactant>
    <organismsDiffer>false</organismsDiffer>
    <experiments>3</experiments>
</comment>
<comment type="interaction">
    <interactant intactId="EBI-448771">
        <id>Q92608</id>
    </interactant>
    <interactant intactId="EBI-3867333">
        <id>A8MQ03</id>
        <label>CYSRT1</label>
    </interactant>
    <organismsDiffer>false</organismsDiffer>
    <experiments>3</experiments>
</comment>
<comment type="interaction">
    <interactant intactId="EBI-448771">
        <id>Q92608</id>
    </interactant>
    <interactant intactId="EBI-5916454">
        <id>A6NEM1</id>
        <label>GOLGA6L9</label>
    </interactant>
    <organismsDiffer>false</organismsDiffer>
    <experiments>3</experiments>
</comment>
<comment type="interaction">
    <interactant intactId="EBI-448771">
        <id>Q92608</id>
    </interactant>
    <interactant intactId="EBI-304185">
        <id>P61978</id>
        <label>HNRNPK</label>
    </interactant>
    <organismsDiffer>false</organismsDiffer>
    <experiments>6</experiments>
</comment>
<comment type="interaction">
    <interactant intactId="EBI-448771">
        <id>Q92608</id>
    </interactant>
    <interactant intactId="EBI-7060731">
        <id>P61978-2</id>
        <label>HNRNPK</label>
    </interactant>
    <organismsDiffer>false</organismsDiffer>
    <experiments>3</experiments>
</comment>
<comment type="interaction">
    <interactant intactId="EBI-448771">
        <id>Q92608</id>
    </interactant>
    <interactant intactId="EBI-740785">
        <id>P49639</id>
        <label>HOXA1</label>
    </interactant>
    <organismsDiffer>false</organismsDiffer>
    <experiments>3</experiments>
</comment>
<comment type="interaction">
    <interactant intactId="EBI-448771">
        <id>Q92608</id>
    </interactant>
    <interactant intactId="EBI-742808">
        <id>Q5VWX1</id>
        <label>KHDRBS2</label>
    </interactant>
    <organismsDiffer>false</organismsDiffer>
    <experiments>6</experiments>
</comment>
<comment type="interaction">
    <interactant intactId="EBI-448771">
        <id>Q92608</id>
    </interactant>
    <interactant intactId="EBI-722504">
        <id>O75525</id>
        <label>KHDRBS3</label>
    </interactant>
    <organismsDiffer>false</organismsDiffer>
    <experiments>3</experiments>
</comment>
<comment type="interaction">
    <interactant intactId="EBI-448771">
        <id>Q92608</id>
    </interactant>
    <interactant intactId="EBI-948001">
        <id>Q15323</id>
        <label>KRT31</label>
    </interactant>
    <organismsDiffer>false</organismsDiffer>
    <experiments>3</experiments>
</comment>
<comment type="interaction">
    <interactant intactId="EBI-448771">
        <id>Q92608</id>
    </interactant>
    <interactant intactId="EBI-1047093">
        <id>O76011</id>
        <label>KRT34</label>
    </interactant>
    <organismsDiffer>false</organismsDiffer>
    <experiments>3</experiments>
</comment>
<comment type="interaction">
    <interactant intactId="EBI-448771">
        <id>Q92608</id>
    </interactant>
    <interactant intactId="EBI-10171697">
        <id>Q6A162</id>
        <label>KRT40</label>
    </interactant>
    <organismsDiffer>false</organismsDiffer>
    <experiments>6</experiments>
</comment>
<comment type="interaction">
    <interactant intactId="EBI-448771">
        <id>Q92608</id>
    </interactant>
    <interactant intactId="EBI-11959885">
        <id>Q07627</id>
        <label>KRTAP1-1</label>
    </interactant>
    <organismsDiffer>false</organismsDiffer>
    <experiments>3</experiments>
</comment>
<comment type="interaction">
    <interactant intactId="EBI-448771">
        <id>Q92608</id>
    </interactant>
    <interactant intactId="EBI-11749135">
        <id>Q8IUG1</id>
        <label>KRTAP1-3</label>
    </interactant>
    <organismsDiffer>false</organismsDiffer>
    <experiments>3</experiments>
</comment>
<comment type="interaction">
    <interactant intactId="EBI-448771">
        <id>Q92608</id>
    </interactant>
    <interactant intactId="EBI-10172290">
        <id>P60409</id>
        <label>KRTAP10-7</label>
    </interactant>
    <organismsDiffer>false</organismsDiffer>
    <experiments>5</experiments>
</comment>
<comment type="interaction">
    <interactant intactId="EBI-448771">
        <id>Q92608</id>
    </interactant>
    <interactant intactId="EBI-10171774">
        <id>P60410</id>
        <label>KRTAP10-8</label>
    </interactant>
    <organismsDiffer>false</organismsDiffer>
    <experiments>6</experiments>
</comment>
<comment type="interaction">
    <interactant intactId="EBI-448771">
        <id>Q92608</id>
    </interactant>
    <interactant intactId="EBI-10172052">
        <id>P60411</id>
        <label>KRTAP10-9</label>
    </interactant>
    <organismsDiffer>false</organismsDiffer>
    <experiments>3</experiments>
</comment>
<comment type="interaction">
    <interactant intactId="EBI-448771">
        <id>Q92608</id>
    </interactant>
    <interactant intactId="EBI-11953334">
        <id>P60328</id>
        <label>KRTAP12-3</label>
    </interactant>
    <organismsDiffer>false</organismsDiffer>
    <experiments>3</experiments>
</comment>
<comment type="interaction">
    <interactant intactId="EBI-448771">
        <id>Q92608</id>
    </interactant>
    <interactant intactId="EBI-11988175">
        <id>Q9BYP8</id>
        <label>KRTAP17-1</label>
    </interactant>
    <organismsDiffer>false</organismsDiffer>
    <experiments>3</experiments>
</comment>
<comment type="interaction">
    <interactant intactId="EBI-448771">
        <id>Q92608</id>
    </interactant>
    <interactant intactId="EBI-9996449">
        <id>Q9BYR8</id>
        <label>KRTAP3-1</label>
    </interactant>
    <organismsDiffer>false</organismsDiffer>
    <experiments>3</experiments>
</comment>
<comment type="interaction">
    <interactant intactId="EBI-448771">
        <id>Q92608</id>
    </interactant>
    <interactant intactId="EBI-3957694">
        <id>Q9BYR6</id>
        <label>KRTAP3-3</label>
    </interactant>
    <organismsDiffer>false</organismsDiffer>
    <experiments>3</experiments>
</comment>
<comment type="interaction">
    <interactant intactId="EBI-448771">
        <id>Q92608</id>
    </interactant>
    <interactant intactId="EBI-10172511">
        <id>Q9BYR5</id>
        <label>KRTAP4-2</label>
    </interactant>
    <organismsDiffer>false</organismsDiffer>
    <experiments>3</experiments>
</comment>
<comment type="interaction">
    <interactant intactId="EBI-448771">
        <id>Q92608</id>
    </interactant>
    <interactant intactId="EBI-11987425">
        <id>Q6L8G8</id>
        <label>KRTAP5-7</label>
    </interactant>
    <organismsDiffer>false</organismsDiffer>
    <experiments>3</experiments>
</comment>
<comment type="interaction">
    <interactant intactId="EBI-448771">
        <id>Q92608</id>
    </interactant>
    <interactant intactId="EBI-3958099">
        <id>P26371</id>
        <label>KRTAP5-9</label>
    </interactant>
    <organismsDiffer>false</organismsDiffer>
    <experiments>6</experiments>
</comment>
<comment type="interaction">
    <interactant intactId="EBI-448771">
        <id>Q92608</id>
    </interactant>
    <interactant intactId="EBI-1044640">
        <id>Q9BYQ4</id>
        <label>KRTAP9-2</label>
    </interactant>
    <organismsDiffer>false</organismsDiffer>
    <experiments>3</experiments>
</comment>
<comment type="interaction">
    <interactant intactId="EBI-448771">
        <id>Q92608</id>
    </interactant>
    <interactant intactId="EBI-1043191">
        <id>Q9BYQ3</id>
        <label>KRTAP9-3</label>
    </interactant>
    <organismsDiffer>false</organismsDiffer>
    <experiments>3</experiments>
</comment>
<comment type="interaction">
    <interactant intactId="EBI-448771">
        <id>Q92608</id>
    </interactant>
    <interactant intactId="EBI-10185730">
        <id>Q9BYQ2</id>
        <label>KRTAP9-4</label>
    </interactant>
    <organismsDiffer>false</organismsDiffer>
    <experiments>3</experiments>
</comment>
<comment type="interaction">
    <interactant intactId="EBI-448771">
        <id>Q92608</id>
    </interactant>
    <interactant intactId="EBI-724076">
        <id>Q99750</id>
        <label>MDFI</label>
    </interactant>
    <organismsDiffer>false</organismsDiffer>
    <experiments>8</experiments>
</comment>
<comment type="interaction">
    <interactant intactId="EBI-448771">
        <id>Q92608</id>
    </interactant>
    <interactant intactId="EBI-742948">
        <id>Q5JR59</id>
        <label>MTUS2</label>
    </interactant>
    <organismsDiffer>false</organismsDiffer>
    <experiments>3</experiments>
</comment>
<comment type="interaction">
    <interactant intactId="EBI-448771">
        <id>Q92608</id>
    </interactant>
    <interactant intactId="EBI-11522433">
        <id>Q5JR59-3</id>
        <label>MTUS2</label>
    </interactant>
    <organismsDiffer>false</organismsDiffer>
    <experiments>3</experiments>
</comment>
<comment type="interaction">
    <interactant intactId="EBI-448771">
        <id>Q92608</id>
    </interactant>
    <interactant intactId="EBI-945833">
        <id>Q7Z3S9</id>
        <label>NOTCH2NLA</label>
    </interactant>
    <organismsDiffer>false</organismsDiffer>
    <experiments>3</experiments>
</comment>
<comment type="interaction">
    <interactant intactId="EBI-448771">
        <id>Q92608</id>
    </interactant>
    <interactant intactId="EBI-22310682">
        <id>P0DPK4</id>
        <label>NOTCH2NLC</label>
    </interactant>
    <organismsDiffer>false</organismsDiffer>
    <experiments>3</experiments>
</comment>
<comment type="interaction">
    <interactant intactId="EBI-448771">
        <id>Q92608</id>
    </interactant>
    <interactant intactId="EBI-11956269">
        <id>Q92824-2</id>
        <label>PCSK5</label>
    </interactant>
    <organismsDiffer>false</organismsDiffer>
    <experiments>3</experiments>
</comment>
<comment type="interaction">
    <interactant intactId="EBI-448771">
        <id>Q92608</id>
    </interactant>
    <interactant intactId="EBI-742388">
        <id>Q9H8W4</id>
        <label>PLEKHF2</label>
    </interactant>
    <organismsDiffer>false</organismsDiffer>
    <experiments>3</experiments>
</comment>
<comment type="interaction">
    <interactant intactId="EBI-448771">
        <id>Q92608</id>
    </interactant>
    <interactant intactId="EBI-740019">
        <id>O15162</id>
        <label>PLSCR1</label>
    </interactant>
    <organismsDiffer>false</organismsDiffer>
    <experiments>3</experiments>
</comment>
<comment type="interaction">
    <interactant intactId="EBI-448771">
        <id>Q92608</id>
    </interactant>
    <interactant intactId="EBI-413628">
        <id>P63000</id>
        <label>RAC1</label>
    </interactant>
    <organismsDiffer>false</organismsDiffer>
    <experiments>3</experiments>
</comment>
<comment type="interaction">
    <interactant intactId="EBI-448771">
        <id>Q92608</id>
    </interactant>
    <interactant intactId="EBI-12827077">
        <id>Q6N022</id>
        <label>TENM4</label>
    </interactant>
    <organismsDiffer>false</organismsDiffer>
    <experiments>3</experiments>
</comment>
<comment type="interaction">
    <interactant intactId="EBI-448771">
        <id>Q92608</id>
    </interactant>
    <interactant intactId="EBI-2562368">
        <id>P22735</id>
        <label>TGM1</label>
    </interactant>
    <organismsDiffer>false</organismsDiffer>
    <experiments>3</experiments>
</comment>
<comment type="interaction">
    <interactant intactId="EBI-448771">
        <id>Q92608</id>
    </interactant>
    <interactant intactId="EBI-740098">
        <id>P36406</id>
        <label>TRIM23</label>
    </interactant>
    <organismsDiffer>false</organismsDiffer>
    <experiments>3</experiments>
</comment>
<comment type="interaction">
    <interactant intactId="EBI-25875570">
        <id>Q92608-2</id>
    </interactant>
    <interactant intactId="EBI-725647">
        <id>Q99732</id>
        <label>LITAF</label>
    </interactant>
    <organismsDiffer>false</organismsDiffer>
    <experiments>3</experiments>
</comment>
<comment type="interaction">
    <interactant intactId="EBI-25875570">
        <id>Q92608-2</id>
    </interactant>
    <interactant intactId="EBI-366182">
        <id>P10636</id>
        <label>MAPT</label>
    </interactant>
    <organismsDiffer>false</organismsDiffer>
    <experiments>3</experiments>
</comment>
<comment type="interaction">
    <interactant intactId="EBI-25875570">
        <id>Q92608-2</id>
    </interactant>
    <interactant intactId="EBI-7796455">
        <id>P10636-6</id>
        <label>MAPT</label>
    </interactant>
    <organismsDiffer>false</organismsDiffer>
    <experiments>3</experiments>
</comment>
<comment type="interaction">
    <interactant intactId="EBI-25875570">
        <id>Q92608-2</id>
    </interactant>
    <interactant intactId="EBI-25878161">
        <id>Q9P1N4</id>
    </interactant>
    <organismsDiffer>false</organismsDiffer>
    <experiments>3</experiments>
</comment>
<comment type="subcellular location">
    <subcellularLocation>
        <location evidence="8">Endomembrane system</location>
        <topology evidence="8">Peripheral membrane protein</topology>
    </subcellularLocation>
    <subcellularLocation>
        <location evidence="8">Cytoplasm</location>
        <location evidence="8">Cytoskeleton</location>
    </subcellularLocation>
    <text>Colocalizes with F-actin.</text>
</comment>
<comment type="alternative products">
    <event type="alternative splicing"/>
    <isoform>
        <id>Q92608-1</id>
        <name>1</name>
        <sequence type="displayed"/>
    </isoform>
    <isoform>
        <id>Q92608-2</id>
        <name>2</name>
        <sequence type="described" ref="VSP_007696 VSP_007697 VSP_007698 VSP_007699 VSP_007700"/>
    </isoform>
</comment>
<comment type="tissue specificity">
    <text evidence="6">Specifically expressed in hematopoietic cells. Highly expressed in peripheral blood leukocytes, and expressed at intermediate level in thymus and spleen. Expressed at very low level in the small intestine and colon.</text>
</comment>
<comment type="domain">
    <text evidence="1">The DOCKER domain may mediate the GEF activity.</text>
</comment>
<comment type="disease" evidence="10">
    <disease id="DI-04461">
        <name>Immunodeficiency 40</name>
        <acronym>IMD40</acronym>
        <description>A form of combined immunodeficiency characterized by lymphopenia, and defective T-cell, B-cell, and NK-cell responses. Patients suffer from severe invasive bacterial and viral infections in early childhood and may die without bone marrow transplantation.</description>
        <dbReference type="MIM" id="616433"/>
    </disease>
    <text>The disease is caused by variants affecting the gene represented in this entry.</text>
</comment>
<comment type="miscellaneous">
    <molecule>Isoform 2</molecule>
    <text evidence="12">Splicing donor and acceptor sites between exon 6 and exon 7 are not canonical.</text>
</comment>
<comment type="similarity">
    <text evidence="3">Belongs to the DOCK family.</text>
</comment>
<comment type="sequence caution" evidence="12">
    <conflict type="erroneous initiation">
        <sequence resource="EMBL-CDS" id="BAA13200"/>
    </conflict>
    <text>Extended N-terminus.</text>
</comment>
<dbReference type="EMBL" id="D86964">
    <property type="protein sequence ID" value="BAA13200.1"/>
    <property type="status" value="ALT_INIT"/>
    <property type="molecule type" value="mRNA"/>
</dbReference>
<dbReference type="EMBL" id="BC016996">
    <property type="protein sequence ID" value="AAH16996.1"/>
    <property type="molecule type" value="mRNA"/>
</dbReference>
<dbReference type="EMBL" id="BC104900">
    <property type="protein sequence ID" value="AAI04901.1"/>
    <property type="molecule type" value="mRNA"/>
</dbReference>
<dbReference type="EMBL" id="BC113457">
    <property type="protein sequence ID" value="AAI13458.1"/>
    <property type="molecule type" value="mRNA"/>
</dbReference>
<dbReference type="CCDS" id="CCDS4371.1">
    <molecule id="Q92608-1"/>
</dbReference>
<dbReference type="RefSeq" id="NP_004937.1">
    <molecule id="Q92608-1"/>
    <property type="nucleotide sequence ID" value="NM_004946.3"/>
</dbReference>
<dbReference type="PDB" id="2RQR">
    <property type="method" value="NMR"/>
    <property type="chains" value="A=8-70"/>
</dbReference>
<dbReference type="PDB" id="2YIN">
    <property type="method" value="X-ray"/>
    <property type="resolution" value="2.70 A"/>
    <property type="chains" value="A/B=1192-1622"/>
</dbReference>
<dbReference type="PDB" id="3A98">
    <property type="method" value="X-ray"/>
    <property type="resolution" value="2.10 A"/>
    <property type="chains" value="A/C=1-177"/>
</dbReference>
<dbReference type="PDB" id="3B13">
    <property type="method" value="X-ray"/>
    <property type="resolution" value="3.01 A"/>
    <property type="chains" value="A/C=1196-1622"/>
</dbReference>
<dbReference type="PDB" id="6TGB">
    <property type="method" value="EM"/>
    <property type="resolution" value="5.50 A"/>
    <property type="chains" value="A/D=1-1830"/>
</dbReference>
<dbReference type="PDB" id="6TGC">
    <property type="method" value="EM"/>
    <property type="resolution" value="4.10 A"/>
    <property type="chains" value="A/D=1-1830"/>
</dbReference>
<dbReference type="PDBsum" id="2RQR"/>
<dbReference type="PDBsum" id="2YIN"/>
<dbReference type="PDBsum" id="3A98"/>
<dbReference type="PDBsum" id="3B13"/>
<dbReference type="PDBsum" id="6TGB"/>
<dbReference type="PDBsum" id="6TGC"/>
<dbReference type="EMDB" id="EMD-10497"/>
<dbReference type="EMDB" id="EMD-10498"/>
<dbReference type="SMR" id="Q92608"/>
<dbReference type="BioGRID" id="108129">
    <property type="interactions" value="67"/>
</dbReference>
<dbReference type="CORUM" id="Q92608"/>
<dbReference type="DIP" id="DIP-31791N"/>
<dbReference type="FunCoup" id="Q92608">
    <property type="interactions" value="1188"/>
</dbReference>
<dbReference type="IntAct" id="Q92608">
    <property type="interactions" value="63"/>
</dbReference>
<dbReference type="MINT" id="Q92608"/>
<dbReference type="STRING" id="9606.ENSP00000429283"/>
<dbReference type="BindingDB" id="Q92608"/>
<dbReference type="ChEMBL" id="CHEMBL4105810"/>
<dbReference type="GlyGen" id="Q92608">
    <property type="glycosylation" value="1 site"/>
</dbReference>
<dbReference type="iPTMnet" id="Q92608"/>
<dbReference type="MetOSite" id="Q92608"/>
<dbReference type="PhosphoSitePlus" id="Q92608"/>
<dbReference type="BioMuta" id="DOCK2"/>
<dbReference type="DMDM" id="32469765"/>
<dbReference type="CPTAC" id="CPTAC-1604"/>
<dbReference type="CPTAC" id="CPTAC-964"/>
<dbReference type="jPOST" id="Q92608"/>
<dbReference type="MassIVE" id="Q92608"/>
<dbReference type="PaxDb" id="9606-ENSP00000256935"/>
<dbReference type="PeptideAtlas" id="Q92608"/>
<dbReference type="ProteomicsDB" id="75352">
    <molecule id="Q92608-1"/>
</dbReference>
<dbReference type="ProteomicsDB" id="75353">
    <molecule id="Q92608-2"/>
</dbReference>
<dbReference type="Pumba" id="Q92608"/>
<dbReference type="Antibodypedia" id="28772">
    <property type="antibodies" value="250 antibodies from 32 providers"/>
</dbReference>
<dbReference type="DNASU" id="1794"/>
<dbReference type="Ensembl" id="ENST00000520908.7">
    <molecule id="Q92608-1"/>
    <property type="protein sequence ID" value="ENSP00000429283.3"/>
    <property type="gene ID" value="ENSG00000134516.20"/>
</dbReference>
<dbReference type="GeneID" id="1794"/>
<dbReference type="KEGG" id="hsa:1794"/>
<dbReference type="MANE-Select" id="ENST00000520908.7">
    <property type="protein sequence ID" value="ENSP00000429283.3"/>
    <property type="RefSeq nucleotide sequence ID" value="NM_004946.3"/>
    <property type="RefSeq protein sequence ID" value="NP_004937.1"/>
</dbReference>
<dbReference type="UCSC" id="uc003maf.3">
    <molecule id="Q92608-1"/>
    <property type="organism name" value="human"/>
</dbReference>
<dbReference type="AGR" id="HGNC:2988"/>
<dbReference type="CTD" id="1794"/>
<dbReference type="DisGeNET" id="1794"/>
<dbReference type="GeneCards" id="DOCK2"/>
<dbReference type="HGNC" id="HGNC:2988">
    <property type="gene designation" value="DOCK2"/>
</dbReference>
<dbReference type="HPA" id="ENSG00000134516">
    <property type="expression patterns" value="Group enriched (bone marrow, lung, lymphoid tissue)"/>
</dbReference>
<dbReference type="MalaCards" id="DOCK2"/>
<dbReference type="MIM" id="603122">
    <property type="type" value="gene"/>
</dbReference>
<dbReference type="MIM" id="616433">
    <property type="type" value="phenotype"/>
</dbReference>
<dbReference type="neXtProt" id="NX_Q92608"/>
<dbReference type="OpenTargets" id="ENSG00000134516"/>
<dbReference type="Orphanet" id="447737">
    <property type="disease" value="Combined immunodeficiency due to DOCK2 deficiency"/>
</dbReference>
<dbReference type="PharmGKB" id="PA27454"/>
<dbReference type="VEuPathDB" id="HostDB:ENSG00000134516"/>
<dbReference type="eggNOG" id="KOG1998">
    <property type="taxonomic scope" value="Eukaryota"/>
</dbReference>
<dbReference type="GeneTree" id="ENSGT00940000154903"/>
<dbReference type="HOGENOM" id="CLU_000595_2_1_1"/>
<dbReference type="InParanoid" id="Q92608"/>
<dbReference type="OMA" id="VECAEHH"/>
<dbReference type="OrthoDB" id="18896at2759"/>
<dbReference type="PAN-GO" id="Q92608">
    <property type="GO annotations" value="6 GO annotations based on evolutionary models"/>
</dbReference>
<dbReference type="PhylomeDB" id="Q92608"/>
<dbReference type="TreeFam" id="TF300423"/>
<dbReference type="PathwayCommons" id="Q92608"/>
<dbReference type="Reactome" id="R-HSA-164944">
    <property type="pathway name" value="Nef and signal transduction"/>
</dbReference>
<dbReference type="Reactome" id="R-HSA-6798695">
    <property type="pathway name" value="Neutrophil degranulation"/>
</dbReference>
<dbReference type="Reactome" id="R-HSA-8980692">
    <property type="pathway name" value="RHOA GTPase cycle"/>
</dbReference>
<dbReference type="Reactome" id="R-HSA-9013149">
    <property type="pathway name" value="RAC1 GTPase cycle"/>
</dbReference>
<dbReference type="Reactome" id="R-HSA-9013404">
    <property type="pathway name" value="RAC2 GTPase cycle"/>
</dbReference>
<dbReference type="Reactome" id="R-HSA-9013408">
    <property type="pathway name" value="RHOG GTPase cycle"/>
</dbReference>
<dbReference type="Reactome" id="R-HSA-983231">
    <property type="pathway name" value="Factors involved in megakaryocyte development and platelet production"/>
</dbReference>
<dbReference type="SignaLink" id="Q92608"/>
<dbReference type="BioGRID-ORCS" id="1794">
    <property type="hits" value="28 hits in 1160 CRISPR screens"/>
</dbReference>
<dbReference type="CD-CODE" id="FB4E32DD">
    <property type="entry name" value="Presynaptic clusters and postsynaptic densities"/>
</dbReference>
<dbReference type="ChiTaRS" id="DOCK2">
    <property type="organism name" value="human"/>
</dbReference>
<dbReference type="EvolutionaryTrace" id="Q92608"/>
<dbReference type="GeneWiki" id="Dock2"/>
<dbReference type="GenomeRNAi" id="1794"/>
<dbReference type="Pharos" id="Q92608">
    <property type="development level" value="Tchem"/>
</dbReference>
<dbReference type="PRO" id="PR:Q92608"/>
<dbReference type="Proteomes" id="UP000005640">
    <property type="component" value="Chromosome 5"/>
</dbReference>
<dbReference type="RNAct" id="Q92608">
    <property type="molecule type" value="protein"/>
</dbReference>
<dbReference type="Bgee" id="ENSG00000134516">
    <property type="expression patterns" value="Expressed in bone marrow cell and 143 other cell types or tissues"/>
</dbReference>
<dbReference type="ExpressionAtlas" id="Q92608">
    <property type="expression patterns" value="baseline and differential"/>
</dbReference>
<dbReference type="GO" id="GO:0005737">
    <property type="term" value="C:cytoplasm"/>
    <property type="evidence" value="ECO:0000318"/>
    <property type="project" value="GO_Central"/>
</dbReference>
<dbReference type="GO" id="GO:0005856">
    <property type="term" value="C:cytoskeleton"/>
    <property type="evidence" value="ECO:0007669"/>
    <property type="project" value="UniProtKB-SubCell"/>
</dbReference>
<dbReference type="GO" id="GO:0005829">
    <property type="term" value="C:cytosol"/>
    <property type="evidence" value="ECO:0000304"/>
    <property type="project" value="Reactome"/>
</dbReference>
<dbReference type="GO" id="GO:0070062">
    <property type="term" value="C:extracellular exosome"/>
    <property type="evidence" value="ECO:0007005"/>
    <property type="project" value="UniProtKB"/>
</dbReference>
<dbReference type="GO" id="GO:0005576">
    <property type="term" value="C:extracellular region"/>
    <property type="evidence" value="ECO:0000304"/>
    <property type="project" value="Reactome"/>
</dbReference>
<dbReference type="GO" id="GO:0016020">
    <property type="term" value="C:membrane"/>
    <property type="evidence" value="ECO:0007005"/>
    <property type="project" value="UniProtKB"/>
</dbReference>
<dbReference type="GO" id="GO:0005886">
    <property type="term" value="C:plasma membrane"/>
    <property type="evidence" value="ECO:0000318"/>
    <property type="project" value="GO_Central"/>
</dbReference>
<dbReference type="GO" id="GO:0035580">
    <property type="term" value="C:specific granule lumen"/>
    <property type="evidence" value="ECO:0000304"/>
    <property type="project" value="Reactome"/>
</dbReference>
<dbReference type="GO" id="GO:0005096">
    <property type="term" value="F:GTPase activator activity"/>
    <property type="evidence" value="ECO:0007669"/>
    <property type="project" value="Ensembl"/>
</dbReference>
<dbReference type="GO" id="GO:0005085">
    <property type="term" value="F:guanyl-nucleotide exchange factor activity"/>
    <property type="evidence" value="ECO:0000314"/>
    <property type="project" value="UniProtKB"/>
</dbReference>
<dbReference type="GO" id="GO:0031267">
    <property type="term" value="F:small GTPase binding"/>
    <property type="evidence" value="ECO:0000318"/>
    <property type="project" value="GO_Central"/>
</dbReference>
<dbReference type="GO" id="GO:0042608">
    <property type="term" value="F:T cell receptor binding"/>
    <property type="evidence" value="ECO:0000314"/>
    <property type="project" value="UniProtKB"/>
</dbReference>
<dbReference type="GO" id="GO:0030036">
    <property type="term" value="P:actin cytoskeleton organization"/>
    <property type="evidence" value="ECO:0000304"/>
    <property type="project" value="UniProtKB"/>
</dbReference>
<dbReference type="GO" id="GO:0046633">
    <property type="term" value="P:alpha-beta T cell proliferation"/>
    <property type="evidence" value="ECO:0007669"/>
    <property type="project" value="Ensembl"/>
</dbReference>
<dbReference type="GO" id="GO:0016477">
    <property type="term" value="P:cell migration"/>
    <property type="evidence" value="ECO:0000318"/>
    <property type="project" value="GO_Central"/>
</dbReference>
<dbReference type="GO" id="GO:0006935">
    <property type="term" value="P:chemotaxis"/>
    <property type="evidence" value="ECO:0007669"/>
    <property type="project" value="Ensembl"/>
</dbReference>
<dbReference type="GO" id="GO:0001768">
    <property type="term" value="P:establishment of T cell polarity"/>
    <property type="evidence" value="ECO:0007669"/>
    <property type="project" value="Ensembl"/>
</dbReference>
<dbReference type="GO" id="GO:0001771">
    <property type="term" value="P:immunological synapse formation"/>
    <property type="evidence" value="ECO:0007669"/>
    <property type="project" value="Ensembl"/>
</dbReference>
<dbReference type="GO" id="GO:0044351">
    <property type="term" value="P:macropinocytosis"/>
    <property type="evidence" value="ECO:0000250"/>
    <property type="project" value="UniProtKB"/>
</dbReference>
<dbReference type="GO" id="GO:0001766">
    <property type="term" value="P:membrane raft polarization"/>
    <property type="evidence" value="ECO:0007669"/>
    <property type="project" value="Ensembl"/>
</dbReference>
<dbReference type="GO" id="GO:0002277">
    <property type="term" value="P:myeloid dendritic cell activation involved in immune response"/>
    <property type="evidence" value="ECO:0000250"/>
    <property type="project" value="UniProtKB"/>
</dbReference>
<dbReference type="GO" id="GO:0007520">
    <property type="term" value="P:myoblast fusion"/>
    <property type="evidence" value="ECO:0000318"/>
    <property type="project" value="GO_Central"/>
</dbReference>
<dbReference type="GO" id="GO:0045060">
    <property type="term" value="P:negative thymic T cell selection"/>
    <property type="evidence" value="ECO:0007669"/>
    <property type="project" value="Ensembl"/>
</dbReference>
<dbReference type="GO" id="GO:0050766">
    <property type="term" value="P:positive regulation of phagocytosis"/>
    <property type="evidence" value="ECO:0000250"/>
    <property type="project" value="UniProtKB"/>
</dbReference>
<dbReference type="GO" id="GO:0045059">
    <property type="term" value="P:positive thymic T cell selection"/>
    <property type="evidence" value="ECO:0007669"/>
    <property type="project" value="Ensembl"/>
</dbReference>
<dbReference type="GO" id="GO:0051056">
    <property type="term" value="P:regulation of small GTPase mediated signal transduction"/>
    <property type="evidence" value="ECO:0000304"/>
    <property type="project" value="Reactome"/>
</dbReference>
<dbReference type="GO" id="GO:0007264">
    <property type="term" value="P:small GTPase-mediated signal transduction"/>
    <property type="evidence" value="ECO:0007669"/>
    <property type="project" value="InterPro"/>
</dbReference>
<dbReference type="CDD" id="cd11706">
    <property type="entry name" value="DHR2_DOCK2"/>
    <property type="match status" value="1"/>
</dbReference>
<dbReference type="CDD" id="cd12050">
    <property type="entry name" value="SH3_DOCK2_A"/>
    <property type="match status" value="1"/>
</dbReference>
<dbReference type="DisProt" id="DP02691"/>
<dbReference type="FunFam" id="1.20.58.740:FF:000004">
    <property type="entry name" value="Dedicator of cytokinesis protein 1"/>
    <property type="match status" value="1"/>
</dbReference>
<dbReference type="FunFam" id="1.25.40.410:FF:000004">
    <property type="entry name" value="Dedicator of cytokinesis protein 1"/>
    <property type="match status" value="1"/>
</dbReference>
<dbReference type="FunFam" id="2.60.40.150:FF:000044">
    <property type="entry name" value="dedicator of cytokinesis protein 1"/>
    <property type="match status" value="1"/>
</dbReference>
<dbReference type="FunFam" id="2.30.30.40:FF:000057">
    <property type="entry name" value="Dedicator of cytokinesis protein 4"/>
    <property type="match status" value="1"/>
</dbReference>
<dbReference type="FunFam" id="1.20.1270.350:FF:000001">
    <property type="entry name" value="dedicator of cytokinesis protein 4"/>
    <property type="match status" value="1"/>
</dbReference>
<dbReference type="Gene3D" id="1.20.58.740">
    <property type="match status" value="1"/>
</dbReference>
<dbReference type="Gene3D" id="1.25.40.410">
    <property type="match status" value="1"/>
</dbReference>
<dbReference type="Gene3D" id="2.60.40.150">
    <property type="entry name" value="C2 domain"/>
    <property type="match status" value="1"/>
</dbReference>
<dbReference type="Gene3D" id="1.20.1270.350">
    <property type="entry name" value="Dedicator of cytokinesis N-terminal subdomain"/>
    <property type="match status" value="1"/>
</dbReference>
<dbReference type="Gene3D" id="2.30.30.40">
    <property type="entry name" value="SH3 Domains"/>
    <property type="match status" value="1"/>
</dbReference>
<dbReference type="InterPro" id="IPR016024">
    <property type="entry name" value="ARM-type_fold"/>
</dbReference>
<dbReference type="InterPro" id="IPR027007">
    <property type="entry name" value="C2_DOCK-type_domain"/>
</dbReference>
<dbReference type="InterPro" id="IPR035892">
    <property type="entry name" value="C2_domain_sf"/>
</dbReference>
<dbReference type="InterPro" id="IPR026799">
    <property type="entry name" value="DHR2_DOCK2"/>
</dbReference>
<dbReference type="InterPro" id="IPR026791">
    <property type="entry name" value="DOCK"/>
</dbReference>
<dbReference type="InterPro" id="IPR043161">
    <property type="entry name" value="DOCK_C_lobe_A"/>
</dbReference>
<dbReference type="InterPro" id="IPR043162">
    <property type="entry name" value="DOCK_C_lobe_C"/>
</dbReference>
<dbReference type="InterPro" id="IPR032376">
    <property type="entry name" value="DOCK_N"/>
</dbReference>
<dbReference type="InterPro" id="IPR042455">
    <property type="entry name" value="DOCK_N_sub1"/>
</dbReference>
<dbReference type="InterPro" id="IPR027357">
    <property type="entry name" value="DOCKER_dom"/>
</dbReference>
<dbReference type="InterPro" id="IPR046769">
    <property type="entry name" value="DOCKER_Lobe_A"/>
</dbReference>
<dbReference type="InterPro" id="IPR046770">
    <property type="entry name" value="DOCKER_Lobe_B"/>
</dbReference>
<dbReference type="InterPro" id="IPR046773">
    <property type="entry name" value="DOCKER_Lobe_C"/>
</dbReference>
<dbReference type="InterPro" id="IPR036028">
    <property type="entry name" value="SH3-like_dom_sf"/>
</dbReference>
<dbReference type="InterPro" id="IPR001452">
    <property type="entry name" value="SH3_domain"/>
</dbReference>
<dbReference type="InterPro" id="IPR056372">
    <property type="entry name" value="TPR_DOCK"/>
</dbReference>
<dbReference type="PANTHER" id="PTHR45653">
    <property type="entry name" value="DEDICATOR OF CYTOKINESIS"/>
    <property type="match status" value="1"/>
</dbReference>
<dbReference type="PANTHER" id="PTHR45653:SF6">
    <property type="entry name" value="DEDICATOR OF CYTOKINESIS PROTEIN 2"/>
    <property type="match status" value="1"/>
</dbReference>
<dbReference type="Pfam" id="PF06920">
    <property type="entry name" value="DHR-2_Lobe_A"/>
    <property type="match status" value="1"/>
</dbReference>
<dbReference type="Pfam" id="PF20422">
    <property type="entry name" value="DHR-2_Lobe_B"/>
    <property type="match status" value="1"/>
</dbReference>
<dbReference type="Pfam" id="PF20421">
    <property type="entry name" value="DHR-2_Lobe_C"/>
    <property type="match status" value="1"/>
</dbReference>
<dbReference type="Pfam" id="PF14429">
    <property type="entry name" value="DOCK-C2"/>
    <property type="match status" value="1"/>
</dbReference>
<dbReference type="Pfam" id="PF16172">
    <property type="entry name" value="DOCK_N"/>
    <property type="match status" value="1"/>
</dbReference>
<dbReference type="Pfam" id="PF07653">
    <property type="entry name" value="SH3_2"/>
    <property type="match status" value="1"/>
</dbReference>
<dbReference type="Pfam" id="PF23554">
    <property type="entry name" value="TPR_DOCK"/>
    <property type="match status" value="1"/>
</dbReference>
<dbReference type="SMART" id="SM00326">
    <property type="entry name" value="SH3"/>
    <property type="match status" value="1"/>
</dbReference>
<dbReference type="SUPFAM" id="SSF48371">
    <property type="entry name" value="ARM repeat"/>
    <property type="match status" value="1"/>
</dbReference>
<dbReference type="SUPFAM" id="SSF50044">
    <property type="entry name" value="SH3-domain"/>
    <property type="match status" value="1"/>
</dbReference>
<dbReference type="PROSITE" id="PS51650">
    <property type="entry name" value="C2_DOCK"/>
    <property type="match status" value="1"/>
</dbReference>
<dbReference type="PROSITE" id="PS51651">
    <property type="entry name" value="DOCKER"/>
    <property type="match status" value="1"/>
</dbReference>
<dbReference type="PROSITE" id="PS50002">
    <property type="entry name" value="SH3"/>
    <property type="match status" value="1"/>
</dbReference>
<sequence>MAPWRKADKERHGVAIYNFQGSGAPQLSLQIGDVVRIQETCGDWYRGYLIKHKMLQGIFPKSFIHIKEVTVEKRRNTENIIPAEIPLAQEVTTTLWEWGSIWKQLYVASKKERFLQVQSMMYDLMEWRSQLLSGTLPKDELKELKQKVTSKIDYGNKILELDLIVRDEDGNILDPDNTSVISLFHAHEEATDKITERIKEEMSKDQPDYAMYSRISSSPTHSLYVFVRNFVCRIGEDAELFMSLYDPNKQTVISENYLVRWGSRGFPKEIEMLNNLKVVFTDLGNKDLNRDKIYLICQIVRVGKMDLKDTGAKKCTQGLRRPFGVAVMDITDIIKGKAESDEEKQHFIPFHPVTAENDFLHSLLGKVIASKGDSGGQGLWVTMKMLVGDIIQIRKDYPHLVDRTTVVARKLGFPEIIMPGDVRNDIYITLLQGDFDKYNKTTQRNVEVIMCVCAEDGKTLPNAICVGAGDKPMNEYRSVVYYQVKQPRWMETVKVAVPIEDMQRIHLRFMFRHRSSLESKDKGEKNFAMSYVKLMKEDGTTLHDGFHDLVVLKGDSKKMEDASAYLTLPSYRHHVENKGATLSRSSSSVGGLSVSSRDVFSISTLVCSTKLTQNVGLLGLLKWRMKPQLLQENLEKLKIVDGEEVVKFLQDTLDALFNIMMEHSQSDEYDILVFDALIYIIGLIADRKFQHFNTVLEAYIQQHFSATLAYKKLMTVLKTYLDTSSRGEQCEPILRTLKALEYVFKFIVRSRTLFSQLYEGKEQMEFEESMRRLFESINNLMKSQYKTTILLQVAALKYIPSVLHDVEMVFDAKLLSQLLYEFYTCIPPVKLQKQKVQSMNEIVQSNLFKKQECRDILLPVITKELKELLEQKDDMQHQVLERKYCVELLNSILEVLSYQDAAFTYHHIQEIMVQLLRTVNRTVITMGRDHILISHFVACMTAILNQMGDQHYSFYIETFQTSSELVDFLMETFIMFKDLIGKNVYPGDWMAMSMVQNRVFLRAINKFAETMNQKFLEHTNFEFQLWNNYFHLAVAFITQDSLQLEQFSHAKYNKILNKYGDMRRLIGFSIRDMWYKLGQNKICFIPGMVGPILEMTLIPEAELRKATIPIFFDMMLCEYQRSGDFKKFENEIILKLDHEVEGGRGDEQYMQLLESILMECAAEHPTIAKSVENFVNLVKGLLEKLLDYRGVMTDESKDNRMSCTVNLLNFYKDNNREEMYIRYLYKLRDLHLDCDNYTEAAYTLLLHTWLLKWSDEQCASQVMQTGQQHPQTHRQLKETLYETIIGYFDKGKMWEEAISLCKELAEQYEMEIFDYELLSQNLIQQAKFYESIMKILRPKPDYFAVGYYGQGFPSFLRNKVFIYRGKEYERREDFQMQLMTQFPNAEKMNTTSAPGDDVKNAPGQYIQCFTVQPVLDEHPRFKNKPVPDQIINFYKSNYVQRFHYSRPVRRGTVDPENEFASMWIERTSFVTAYKLPGILRWFEVVHMSQTTISPLENAIETMSTANEKILMMINQYQSDETLPINPLSMLLNGIVDPAVMGGFAKYEKAFFTEEYVRDHPEDQDKLTHLKDLIAWQIPFLGAGIKIHEKRVSDNLRPFHDRMEECFKNLKMKVEKEYGVREMPDFDDRRVGRPRSMLRSYRQMSIISLASMNSDCSTPSKPTSESFDLELASPKTPRVEQEEPISPGSTLPEVKLRRSKKRTKRSSVVFADEKAAAESDLKRLSRKHEFMSDTNLSEHAAIPLKASVLSQMSFASQSMPTIPALALSVAGIPGLDEANTSPRLSQTFLQLSDGDKKTLTRKKVNQFFKTMLASKSAEEGKQIPDSLSTDL</sequence>
<keyword id="KW-0002">3D-structure</keyword>
<keyword id="KW-0007">Acetylation</keyword>
<keyword id="KW-0025">Alternative splicing</keyword>
<keyword id="KW-0963">Cytoplasm</keyword>
<keyword id="KW-0206">Cytoskeleton</keyword>
<keyword id="KW-0225">Disease variant</keyword>
<keyword id="KW-0344">Guanine-nucleotide releasing factor</keyword>
<keyword id="KW-0472">Membrane</keyword>
<keyword id="KW-0597">Phosphoprotein</keyword>
<keyword id="KW-1267">Proteomics identification</keyword>
<keyword id="KW-1185">Reference proteome</keyword>
<keyword id="KW-0728">SH3 domain</keyword>
<reference key="1">
    <citation type="journal article" date="1996" name="DNA Res.">
        <title>Prediction of the coding sequences of unidentified human genes. VI. The coding sequences of 80 new genes (KIAA0201-KIAA0280) deduced by analysis of cDNA clones from cell line KG-1 and brain.</title>
        <authorList>
            <person name="Nagase T."/>
            <person name="Seki N."/>
            <person name="Ishikawa K."/>
            <person name="Ohira M."/>
            <person name="Kawarabayasi Y."/>
            <person name="Ohara O."/>
            <person name="Tanaka A."/>
            <person name="Kotani H."/>
            <person name="Miyajima N."/>
            <person name="Nomura N."/>
        </authorList>
    </citation>
    <scope>NUCLEOTIDE SEQUENCE [LARGE SCALE MRNA] (ISOFORM 1)</scope>
    <source>
        <tissue>Bone marrow</tissue>
    </source>
</reference>
<reference key="2">
    <citation type="journal article" date="2004" name="Genome Res.">
        <title>The status, quality, and expansion of the NIH full-length cDNA project: the Mammalian Gene Collection (MGC).</title>
        <authorList>
            <consortium name="The MGC Project Team"/>
        </authorList>
    </citation>
    <scope>NUCLEOTIDE SEQUENCE [LARGE SCALE MRNA] (ISOFORMS 1 AND 2)</scope>
    <source>
        <tissue>Colon</tissue>
        <tissue>Liver</tissue>
    </source>
</reference>
<reference key="3">
    <citation type="journal article" date="1999" name="Biochim. Biophys. Acta">
        <title>Non-adherent cell-specific expression of DOCK2, a member of the human CDM-family proteins.</title>
        <authorList>
            <person name="Nishihara H."/>
            <person name="Kobayashi S."/>
            <person name="Hashimoto Y."/>
            <person name="Ohba F."/>
            <person name="Mochizuki N."/>
            <person name="Kurata T."/>
            <person name="Nagashima K."/>
            <person name="Matsuda M."/>
        </authorList>
    </citation>
    <scope>TISSUE SPECIFICITY</scope>
    <scope>RAC1 ACTIVATION</scope>
    <scope>INTERACTION WITH RAC1 AND RAC2</scope>
</reference>
<reference key="4">
    <citation type="journal article" date="2002" name="Blood">
        <title>DOCK2 associates with CrkL and regulates Rac1 in human leukemia cell lines.</title>
        <authorList>
            <person name="Nishihara H."/>
            <person name="Maeda M."/>
            <person name="Oda A."/>
            <person name="Tsuda M."/>
            <person name="Sawa H."/>
            <person name="Nagashima K."/>
            <person name="Tanaka S."/>
        </authorList>
    </citation>
    <scope>SUBCELLULAR LOCATION</scope>
    <scope>INTERACTION WITH CRKL AND VAV</scope>
</reference>
<reference key="5">
    <citation type="journal article" date="2002" name="Biochem. Biophys. Res. Commun.">
        <title>DOCK2 mediates T cell receptor-induced activation of Rac2 and IL-2 transcription.</title>
        <authorList>
            <person name="Nishihara H."/>
            <person name="Maeda M."/>
            <person name="Tsuda M."/>
            <person name="Makino Y."/>
            <person name="Sawa H."/>
            <person name="Nagashima K."/>
            <person name="Tanaka S."/>
        </authorList>
    </citation>
    <scope>INTERACTION WITH CD3Z</scope>
</reference>
<reference key="6">
    <citation type="journal article" date="2002" name="J. Cell Sci.">
        <title>Identification of an evolutionarily conserved superfamily of DOCK180-related proteins with guanine nucleotide exchange activity.</title>
        <authorList>
            <person name="Cote J.-F."/>
            <person name="Vuori K."/>
        </authorList>
    </citation>
    <scope>NOMENCLATURE</scope>
</reference>
<reference key="7">
    <citation type="journal article" date="2003" name="Nature">
        <title>Proteomic characterization of the human centrosome by protein correlation profiling.</title>
        <authorList>
            <person name="Andersen J.S."/>
            <person name="Wilkinson C.J."/>
            <person name="Mayor T."/>
            <person name="Mortensen P."/>
            <person name="Nigg E.A."/>
            <person name="Mann M."/>
        </authorList>
    </citation>
    <scope>IDENTIFICATION BY MASS SPECTROMETRY</scope>
    <source>
        <tissue>Lymphoblast</tissue>
    </source>
</reference>
<reference key="8">
    <citation type="journal article" date="2004" name="Anal. Chem.">
        <title>Robust phosphoproteomic profiling of tyrosine phosphorylation sites from human T cells using immobilized metal affinity chromatography and tandem mass spectrometry.</title>
        <authorList>
            <person name="Brill L.M."/>
            <person name="Salomon A.R."/>
            <person name="Ficarro S.B."/>
            <person name="Mukherji M."/>
            <person name="Stettler-Gill M."/>
            <person name="Peters E.C."/>
        </authorList>
    </citation>
    <scope>IDENTIFICATION BY MASS SPECTROMETRY [LARGE SCALE ANALYSIS]</scope>
    <source>
        <tissue>Leukemic T-cell</tissue>
    </source>
</reference>
<reference key="9">
    <citation type="journal article" date="2008" name="J. Proteome Res.">
        <title>Phosphorylation analysis of primary human T lymphocytes using sequential IMAC and titanium oxide enrichment.</title>
        <authorList>
            <person name="Carrascal M."/>
            <person name="Ovelleiro D."/>
            <person name="Casas V."/>
            <person name="Gay M."/>
            <person name="Abian J."/>
        </authorList>
    </citation>
    <scope>PHOSPHORYLATION [LARGE SCALE ANALYSIS] AT SER-1685</scope>
    <scope>IDENTIFICATION BY MASS SPECTROMETRY [LARGE SCALE ANALYSIS]</scope>
    <source>
        <tissue>T-cell</tissue>
    </source>
</reference>
<reference key="10">
    <citation type="journal article" date="2009" name="Mol. Cell. Proteomics">
        <title>Large-scale proteomics analysis of the human kinome.</title>
        <authorList>
            <person name="Oppermann F.S."/>
            <person name="Gnad F."/>
            <person name="Olsen J.V."/>
            <person name="Hornberger R."/>
            <person name="Greff Z."/>
            <person name="Keri G."/>
            <person name="Mann M."/>
            <person name="Daub H."/>
        </authorList>
    </citation>
    <scope>PHOSPHORYLATION [LARGE SCALE ANALYSIS] AT SER-1685</scope>
    <scope>IDENTIFICATION BY MASS SPECTROMETRY [LARGE SCALE ANALYSIS]</scope>
</reference>
<reference key="11">
    <citation type="journal article" date="2009" name="Sci. Signal.">
        <title>Quantitative phosphoproteomic analysis of T cell receptor signaling reveals system-wide modulation of protein-protein interactions.</title>
        <authorList>
            <person name="Mayya V."/>
            <person name="Lundgren D.H."/>
            <person name="Hwang S.-I."/>
            <person name="Rezaul K."/>
            <person name="Wu L."/>
            <person name="Eng J.K."/>
            <person name="Rodionov V."/>
            <person name="Han D.K."/>
        </authorList>
    </citation>
    <scope>PHOSPHORYLATION [LARGE SCALE ANALYSIS] AT SER-588; SER-593; SER-1685 AND SER-1731</scope>
    <scope>IDENTIFICATION BY MASS SPECTROMETRY [LARGE SCALE ANALYSIS]</scope>
    <source>
        <tissue>Leukemic T-cell</tissue>
    </source>
</reference>
<reference key="12">
    <citation type="journal article" date="2009" name="Science">
        <title>Lysine acetylation targets protein complexes and co-regulates major cellular functions.</title>
        <authorList>
            <person name="Choudhary C."/>
            <person name="Kumar C."/>
            <person name="Gnad F."/>
            <person name="Nielsen M.L."/>
            <person name="Rehman M."/>
            <person name="Walther T.C."/>
            <person name="Olsen J.V."/>
            <person name="Mann M."/>
        </authorList>
    </citation>
    <scope>ACETYLATION [LARGE SCALE ANALYSIS] AT LYS-304 AND LYS-738</scope>
    <scope>IDENTIFICATION BY MASS SPECTROMETRY [LARGE SCALE ANALYSIS]</scope>
</reference>
<reference key="13">
    <citation type="journal article" date="2011" name="BMC Syst. Biol.">
        <title>Initial characterization of the human central proteome.</title>
        <authorList>
            <person name="Burkard T.R."/>
            <person name="Planyavsky M."/>
            <person name="Kaupe I."/>
            <person name="Breitwieser F.P."/>
            <person name="Buerckstuemmer T."/>
            <person name="Bennett K.L."/>
            <person name="Superti-Furga G."/>
            <person name="Colinge J."/>
        </authorList>
    </citation>
    <scope>IDENTIFICATION BY MASS SPECTROMETRY [LARGE SCALE ANALYSIS]</scope>
</reference>
<reference key="14">
    <citation type="journal article" date="2013" name="J. Proteome Res.">
        <title>Toward a comprehensive characterization of a human cancer cell phosphoproteome.</title>
        <authorList>
            <person name="Zhou H."/>
            <person name="Di Palma S."/>
            <person name="Preisinger C."/>
            <person name="Peng M."/>
            <person name="Polat A.N."/>
            <person name="Heck A.J."/>
            <person name="Mohammed S."/>
        </authorList>
    </citation>
    <scope>PHOSPHORYLATION [LARGE SCALE ANALYSIS] AT SER-1685; SER-1706; SER-1731 AND SER-1784</scope>
    <scope>IDENTIFICATION BY MASS SPECTROMETRY [LARGE SCALE ANALYSIS]</scope>
    <source>
        <tissue>Erythroleukemia</tissue>
    </source>
</reference>
<reference key="15">
    <citation type="journal article" date="2014" name="J. Proteomics">
        <title>An enzyme assisted RP-RPLC approach for in-depth analysis of human liver phosphoproteome.</title>
        <authorList>
            <person name="Bian Y."/>
            <person name="Song C."/>
            <person name="Cheng K."/>
            <person name="Dong M."/>
            <person name="Wang F."/>
            <person name="Huang J."/>
            <person name="Sun D."/>
            <person name="Wang L."/>
            <person name="Ye M."/>
            <person name="Zou H."/>
        </authorList>
    </citation>
    <scope>PHOSPHORYLATION [LARGE SCALE ANALYSIS] AT SER-1685</scope>
    <scope>IDENTIFICATION BY MASS SPECTROMETRY [LARGE SCALE ANALYSIS]</scope>
    <source>
        <tissue>Liver</tissue>
    </source>
</reference>
<reference key="16">
    <citation type="journal article" date="2015" name="N. Engl. J. Med.">
        <title>Inherited DOCK2 deficiency in patients with early-onset invasive infections.</title>
        <authorList>
            <person name="Dobbs K."/>
            <person name="Dominguez Conde C."/>
            <person name="Zhang S.Y."/>
            <person name="Parolini S."/>
            <person name="Audry M."/>
            <person name="Chou J."/>
            <person name="Haapaniemi E."/>
            <person name="Keles S."/>
            <person name="Bilic I."/>
            <person name="Okada S."/>
            <person name="Massaad M.J."/>
            <person name="Rounioja S."/>
            <person name="Alwahadneh A.M."/>
            <person name="Serwas N.K."/>
            <person name="Capuder K."/>
            <person name="Ciftci E."/>
            <person name="Felgentreff K."/>
            <person name="Ohsumi T.K."/>
            <person name="Pedergnana V."/>
            <person name="Boisson B."/>
            <person name="Haskologlu S."/>
            <person name="Ensari A."/>
            <person name="Schuster M."/>
            <person name="Moretta A."/>
            <person name="Itan Y."/>
            <person name="Patrizi O."/>
            <person name="Rozenberg F."/>
            <person name="Lebon P."/>
            <person name="Saarela J."/>
            <person name="Knip M."/>
            <person name="Petrovski S."/>
            <person name="Goldstein D.B."/>
            <person name="Parrott R.E."/>
            <person name="Savas B."/>
            <person name="Schambach A."/>
            <person name="Tabellini G."/>
            <person name="Bock C."/>
            <person name="Chatila T.A."/>
            <person name="Comeau A.M."/>
            <person name="Geha R.S."/>
            <person name="Abel L."/>
            <person name="Buckley R.H."/>
            <person name="Ikinciogullari A."/>
            <person name="Al-Herz W."/>
            <person name="Helminen M."/>
            <person name="Dogu F."/>
            <person name="Casanova J.L."/>
            <person name="Boztug K."/>
            <person name="Notarangelo L.D."/>
        </authorList>
    </citation>
    <scope>INVOLVEMENT IN IMD40</scope>
    <scope>VARIANTS IMD40 SER-751 AND TRP-1104</scope>
</reference>
<reference key="17">
    <citation type="journal article" date="2015" name="Proteomics">
        <title>N-terminome analysis of the human mitochondrial proteome.</title>
        <authorList>
            <person name="Vaca Jacome A.S."/>
            <person name="Rabilloud T."/>
            <person name="Schaeffer-Reiss C."/>
            <person name="Rompais M."/>
            <person name="Ayoub D."/>
            <person name="Lane L."/>
            <person name="Bairoch A."/>
            <person name="Van Dorsselaer A."/>
            <person name="Carapito C."/>
        </authorList>
    </citation>
    <scope>IDENTIFICATION BY MASS SPECTROMETRY [LARGE SCALE ANALYSIS]</scope>
</reference>
<reference key="18">
    <citation type="submission" date="2010-10" db="PDB data bank">
        <title>The solution structure of human DOCK2 SH3 domain - ELMO1 peptide chimera complex.</title>
        <authorList>
            <consortium name="RIKEN structural genomics initiative (RSGI)"/>
        </authorList>
    </citation>
    <scope>STRUCTURE BY NMR OF 8-70</scope>
</reference>
<reference key="19">
    <citation type="journal article" date="2011" name="J. Biol. Chem.">
        <title>Multiple factors confer specific Cdc42 and Rac protein activation by dedicator of cytokinesis (DOCK) nucleotide exchange factors.</title>
        <authorList>
            <person name="Kulkarni K."/>
            <person name="Yang J."/>
            <person name="Zhang Z."/>
            <person name="Barford D."/>
        </authorList>
    </citation>
    <scope>X-RAY CRYSTALLOGRAPHY (2.7 ANGSTROMS) OF 1192-1622 IN COMPLEX WITH RAC1</scope>
    <scope>INTERACTION WITH RAC1</scope>
    <scope>SUBUNIT</scope>
    <scope>FUNCTION</scope>
</reference>